<keyword id="KW-0028">Amino-acid biosynthesis</keyword>
<keyword id="KW-0057">Aromatic amino acid biosynthesis</keyword>
<keyword id="KW-0328">Glycosyltransferase</keyword>
<keyword id="KW-0460">Magnesium</keyword>
<keyword id="KW-0479">Metal-binding</keyword>
<keyword id="KW-1185">Reference proteome</keyword>
<keyword id="KW-0808">Transferase</keyword>
<keyword id="KW-0822">Tryptophan biosynthesis</keyword>
<proteinExistence type="inferred from homology"/>
<evidence type="ECO:0000255" key="1">
    <source>
        <dbReference type="HAMAP-Rule" id="MF_00211"/>
    </source>
</evidence>
<dbReference type="EC" id="2.4.2.18" evidence="1"/>
<dbReference type="EMBL" id="AE016822">
    <property type="protein sequence ID" value="AAT88858.1"/>
    <property type="molecule type" value="Genomic_DNA"/>
</dbReference>
<dbReference type="RefSeq" id="WP_011185855.1">
    <property type="nucleotide sequence ID" value="NC_006087.1"/>
</dbReference>
<dbReference type="SMR" id="Q6AFI7"/>
<dbReference type="STRING" id="281090.Lxx09860"/>
<dbReference type="KEGG" id="lxx:Lxx09860"/>
<dbReference type="eggNOG" id="COG0547">
    <property type="taxonomic scope" value="Bacteria"/>
</dbReference>
<dbReference type="HOGENOM" id="CLU_034315_4_1_11"/>
<dbReference type="UniPathway" id="UPA00035">
    <property type="reaction ID" value="UER00041"/>
</dbReference>
<dbReference type="Proteomes" id="UP000001306">
    <property type="component" value="Chromosome"/>
</dbReference>
<dbReference type="GO" id="GO:0005829">
    <property type="term" value="C:cytosol"/>
    <property type="evidence" value="ECO:0007669"/>
    <property type="project" value="TreeGrafter"/>
</dbReference>
<dbReference type="GO" id="GO:0004048">
    <property type="term" value="F:anthranilate phosphoribosyltransferase activity"/>
    <property type="evidence" value="ECO:0007669"/>
    <property type="project" value="UniProtKB-UniRule"/>
</dbReference>
<dbReference type="GO" id="GO:0000287">
    <property type="term" value="F:magnesium ion binding"/>
    <property type="evidence" value="ECO:0007669"/>
    <property type="project" value="UniProtKB-UniRule"/>
</dbReference>
<dbReference type="GO" id="GO:0000162">
    <property type="term" value="P:L-tryptophan biosynthetic process"/>
    <property type="evidence" value="ECO:0007669"/>
    <property type="project" value="UniProtKB-UniRule"/>
</dbReference>
<dbReference type="FunFam" id="3.40.1030.10:FF:000002">
    <property type="entry name" value="Anthranilate phosphoribosyltransferase"/>
    <property type="match status" value="1"/>
</dbReference>
<dbReference type="Gene3D" id="3.40.1030.10">
    <property type="entry name" value="Nucleoside phosphorylase/phosphoribosyltransferase catalytic domain"/>
    <property type="match status" value="1"/>
</dbReference>
<dbReference type="Gene3D" id="1.20.970.10">
    <property type="entry name" value="Transferase, Pyrimidine Nucleoside Phosphorylase, Chain C"/>
    <property type="match status" value="1"/>
</dbReference>
<dbReference type="HAMAP" id="MF_00211">
    <property type="entry name" value="TrpD"/>
    <property type="match status" value="1"/>
</dbReference>
<dbReference type="InterPro" id="IPR005940">
    <property type="entry name" value="Anthranilate_Pribosyl_Tfrase"/>
</dbReference>
<dbReference type="InterPro" id="IPR000312">
    <property type="entry name" value="Glycosyl_Trfase_fam3"/>
</dbReference>
<dbReference type="InterPro" id="IPR017459">
    <property type="entry name" value="Glycosyl_Trfase_fam3_N_dom"/>
</dbReference>
<dbReference type="InterPro" id="IPR036320">
    <property type="entry name" value="Glycosyl_Trfase_fam3_N_dom_sf"/>
</dbReference>
<dbReference type="InterPro" id="IPR035902">
    <property type="entry name" value="Nuc_phospho_transferase"/>
</dbReference>
<dbReference type="NCBIfam" id="TIGR01245">
    <property type="entry name" value="trpD"/>
    <property type="match status" value="1"/>
</dbReference>
<dbReference type="PANTHER" id="PTHR43285">
    <property type="entry name" value="ANTHRANILATE PHOSPHORIBOSYLTRANSFERASE"/>
    <property type="match status" value="1"/>
</dbReference>
<dbReference type="PANTHER" id="PTHR43285:SF2">
    <property type="entry name" value="ANTHRANILATE PHOSPHORIBOSYLTRANSFERASE"/>
    <property type="match status" value="1"/>
</dbReference>
<dbReference type="Pfam" id="PF02885">
    <property type="entry name" value="Glycos_trans_3N"/>
    <property type="match status" value="1"/>
</dbReference>
<dbReference type="Pfam" id="PF00591">
    <property type="entry name" value="Glycos_transf_3"/>
    <property type="match status" value="1"/>
</dbReference>
<dbReference type="SUPFAM" id="SSF52418">
    <property type="entry name" value="Nucleoside phosphorylase/phosphoribosyltransferase catalytic domain"/>
    <property type="match status" value="1"/>
</dbReference>
<dbReference type="SUPFAM" id="SSF47648">
    <property type="entry name" value="Nucleoside phosphorylase/phosphoribosyltransferase N-terminal domain"/>
    <property type="match status" value="1"/>
</dbReference>
<protein>
    <recommendedName>
        <fullName evidence="1">Anthranilate phosphoribosyltransferase</fullName>
        <ecNumber evidence="1">2.4.2.18</ecNumber>
    </recommendedName>
</protein>
<comment type="function">
    <text evidence="1">Catalyzes the transfer of the phosphoribosyl group of 5-phosphorylribose-1-pyrophosphate (PRPP) to anthranilate to yield N-(5'-phosphoribosyl)-anthranilate (PRA).</text>
</comment>
<comment type="catalytic activity">
    <reaction evidence="1">
        <text>N-(5-phospho-beta-D-ribosyl)anthranilate + diphosphate = 5-phospho-alpha-D-ribose 1-diphosphate + anthranilate</text>
        <dbReference type="Rhea" id="RHEA:11768"/>
        <dbReference type="ChEBI" id="CHEBI:16567"/>
        <dbReference type="ChEBI" id="CHEBI:18277"/>
        <dbReference type="ChEBI" id="CHEBI:33019"/>
        <dbReference type="ChEBI" id="CHEBI:58017"/>
        <dbReference type="EC" id="2.4.2.18"/>
    </reaction>
</comment>
<comment type="cofactor">
    <cofactor evidence="1">
        <name>Mg(2+)</name>
        <dbReference type="ChEBI" id="CHEBI:18420"/>
    </cofactor>
    <text evidence="1">Binds 2 magnesium ions per monomer.</text>
</comment>
<comment type="pathway">
    <text evidence="1">Amino-acid biosynthesis; L-tryptophan biosynthesis; L-tryptophan from chorismate: step 2/5.</text>
</comment>
<comment type="subunit">
    <text evidence="1">Homodimer.</text>
</comment>
<comment type="similarity">
    <text evidence="1">Belongs to the anthranilate phosphoribosyltransferase family.</text>
</comment>
<feature type="chain" id="PRO_0000154454" description="Anthranilate phosphoribosyltransferase">
    <location>
        <begin position="1"/>
        <end position="349"/>
    </location>
</feature>
<feature type="binding site" evidence="1">
    <location>
        <position position="84"/>
    </location>
    <ligand>
        <name>5-phospho-alpha-D-ribose 1-diphosphate</name>
        <dbReference type="ChEBI" id="CHEBI:58017"/>
    </ligand>
</feature>
<feature type="binding site" evidence="1">
    <location>
        <position position="84"/>
    </location>
    <ligand>
        <name>anthranilate</name>
        <dbReference type="ChEBI" id="CHEBI:16567"/>
        <label>1</label>
    </ligand>
</feature>
<feature type="binding site" evidence="1">
    <location>
        <begin position="87"/>
        <end position="88"/>
    </location>
    <ligand>
        <name>5-phospho-alpha-D-ribose 1-diphosphate</name>
        <dbReference type="ChEBI" id="CHEBI:58017"/>
    </ligand>
</feature>
<feature type="binding site" evidence="1">
    <location>
        <position position="92"/>
    </location>
    <ligand>
        <name>5-phospho-alpha-D-ribose 1-diphosphate</name>
        <dbReference type="ChEBI" id="CHEBI:58017"/>
    </ligand>
</feature>
<feature type="binding site" evidence="1">
    <location>
        <begin position="94"/>
        <end position="97"/>
    </location>
    <ligand>
        <name>5-phospho-alpha-D-ribose 1-diphosphate</name>
        <dbReference type="ChEBI" id="CHEBI:58017"/>
    </ligand>
</feature>
<feature type="binding site" evidence="1">
    <location>
        <position position="96"/>
    </location>
    <ligand>
        <name>Mg(2+)</name>
        <dbReference type="ChEBI" id="CHEBI:18420"/>
        <label>1</label>
    </ligand>
</feature>
<feature type="binding site" evidence="1">
    <location>
        <begin position="112"/>
        <end position="120"/>
    </location>
    <ligand>
        <name>5-phospho-alpha-D-ribose 1-diphosphate</name>
        <dbReference type="ChEBI" id="CHEBI:58017"/>
    </ligand>
</feature>
<feature type="binding site" evidence="1">
    <location>
        <position position="115"/>
    </location>
    <ligand>
        <name>anthranilate</name>
        <dbReference type="ChEBI" id="CHEBI:16567"/>
        <label>1</label>
    </ligand>
</feature>
<feature type="binding site" evidence="1">
    <location>
        <position position="124"/>
    </location>
    <ligand>
        <name>5-phospho-alpha-D-ribose 1-diphosphate</name>
        <dbReference type="ChEBI" id="CHEBI:58017"/>
    </ligand>
</feature>
<feature type="binding site" evidence="1">
    <location>
        <position position="170"/>
    </location>
    <ligand>
        <name>anthranilate</name>
        <dbReference type="ChEBI" id="CHEBI:16567"/>
        <label>2</label>
    </ligand>
</feature>
<feature type="binding site" evidence="1">
    <location>
        <position position="228"/>
    </location>
    <ligand>
        <name>Mg(2+)</name>
        <dbReference type="ChEBI" id="CHEBI:18420"/>
        <label>2</label>
    </ligand>
</feature>
<feature type="binding site" evidence="1">
    <location>
        <position position="229"/>
    </location>
    <ligand>
        <name>Mg(2+)</name>
        <dbReference type="ChEBI" id="CHEBI:18420"/>
        <label>1</label>
    </ligand>
</feature>
<feature type="binding site" evidence="1">
    <location>
        <position position="229"/>
    </location>
    <ligand>
        <name>Mg(2+)</name>
        <dbReference type="ChEBI" id="CHEBI:18420"/>
        <label>2</label>
    </ligand>
</feature>
<organism>
    <name type="scientific">Leifsonia xyli subsp. xyli (strain CTCB07)</name>
    <dbReference type="NCBI Taxonomy" id="281090"/>
    <lineage>
        <taxon>Bacteria</taxon>
        <taxon>Bacillati</taxon>
        <taxon>Actinomycetota</taxon>
        <taxon>Actinomycetes</taxon>
        <taxon>Micrococcales</taxon>
        <taxon>Microbacteriaceae</taxon>
        <taxon>Leifsonia</taxon>
    </lineage>
</organism>
<gene>
    <name evidence="1" type="primary">trpD</name>
    <name type="ordered locus">Lxx09860</name>
</gene>
<name>TRPD_LEIXX</name>
<reference key="1">
    <citation type="journal article" date="2004" name="Mol. Plant Microbe Interact.">
        <title>The genome sequence of the Gram-positive sugarcane pathogen Leifsonia xyli subsp. xyli.</title>
        <authorList>
            <person name="Monteiro-Vitorello C.B."/>
            <person name="Camargo L.E.A."/>
            <person name="Van Sluys M.A."/>
            <person name="Kitajima J.P."/>
            <person name="Truffi D."/>
            <person name="do Amaral A.M."/>
            <person name="Harakava R."/>
            <person name="de Oliveira J.C.F."/>
            <person name="Wood D."/>
            <person name="de Oliveira M.C."/>
            <person name="Miyaki C.Y."/>
            <person name="Takita M.A."/>
            <person name="da Silva A.C.R."/>
            <person name="Furlan L.R."/>
            <person name="Carraro D.M."/>
            <person name="Camarotte G."/>
            <person name="Almeida N.F. Jr."/>
            <person name="Carrer H."/>
            <person name="Coutinho L.L."/>
            <person name="El-Dorry H.A."/>
            <person name="Ferro M.I.T."/>
            <person name="Gagliardi P.R."/>
            <person name="Giglioti E."/>
            <person name="Goldman M.H.S."/>
            <person name="Goldman G.H."/>
            <person name="Kimura E.T."/>
            <person name="Ferro E.S."/>
            <person name="Kuramae E.E."/>
            <person name="Lemos E.G.M."/>
            <person name="Lemos M.V.F."/>
            <person name="Mauro S.M.Z."/>
            <person name="Machado M.A."/>
            <person name="Marino C.L."/>
            <person name="Menck C.F."/>
            <person name="Nunes L.R."/>
            <person name="Oliveira R.C."/>
            <person name="Pereira G.G."/>
            <person name="Siqueira W."/>
            <person name="de Souza A.A."/>
            <person name="Tsai S.M."/>
            <person name="Zanca A.S."/>
            <person name="Simpson A.J.G."/>
            <person name="Brumbley S.M."/>
            <person name="Setubal J.C."/>
        </authorList>
    </citation>
    <scope>NUCLEOTIDE SEQUENCE [LARGE SCALE GENOMIC DNA]</scope>
    <source>
        <strain>CTCB07</strain>
    </source>
</reference>
<accession>Q6AFI7</accession>
<sequence length="349" mass="36113">MSETQSWSSVLIALLAREDLSVADASWAMRQVMTGEATDAQIAAFLIALRAKGETVDEIVGFRDAVLDHAVGLPVNSMALDIVGTGGDRFGTVNISTTAAIVAAGAGVPVIKHGNRAASSSSGSSDVLAALGIDLTLPPERVAEVLRATGITFAFASAFHPGFANAAAVRSQLGVPTVFNILGPLCNPARPEASAVGVAPLDRVPLIVGVFQTRGATALVFRGDDGLDELSTTGHSHVWEVSRGLVTEHDIDPRDLGLPTAQIEDLLGKDAAHNAAVVRAVLAGQEGPVRDIVVLNAAAGLVSYELAADPSRVQEPILDRFRSHMAVAAEAIDSGAAVSKLEEWVAATR</sequence>